<sequence length="341" mass="37950">MEDDFDIRDARMPENEREYENVLRPLSLRDFSGQAKVVENLKVFVMAARMRKEALDHVLLHGPPGLGKTTLSNIIANELGVGFKVTSGPVLDKPGDLAGVLTSLEKNDVLFIDEIHRLSPIVEEYLYSAMEDYRIDIVIDKGPSARSIQIDLAPFTLIGATTRSGLLTSPLRARFGINMHLEYYDMETLTKIVLRSANILNVKCELNAAREIASRSRGTPRIANALLRRVRDFAQVKGNGDIDKAIACFSLEALNIDRYGLDQIDNKLLTTIIDKFKGGPVGLTTIATALGEDPGTLEEVYEPFLIKEGFIKRTPRGREVTDLAYTHLGRSRVGEQGFLFD</sequence>
<reference key="1">
    <citation type="journal article" date="2007" name="PLoS Biol.">
        <title>Evolution of symbiotic bacteria in the distal human intestine.</title>
        <authorList>
            <person name="Xu J."/>
            <person name="Mahowald M.A."/>
            <person name="Ley R.E."/>
            <person name="Lozupone C.A."/>
            <person name="Hamady M."/>
            <person name="Martens E.C."/>
            <person name="Henrissat B."/>
            <person name="Coutinho P.M."/>
            <person name="Minx P."/>
            <person name="Latreille P."/>
            <person name="Cordum H."/>
            <person name="Van Brunt A."/>
            <person name="Kim K."/>
            <person name="Fulton R.S."/>
            <person name="Fulton L.A."/>
            <person name="Clifton S.W."/>
            <person name="Wilson R.K."/>
            <person name="Knight R.D."/>
            <person name="Gordon J.I."/>
        </authorList>
    </citation>
    <scope>NUCLEOTIDE SEQUENCE [LARGE SCALE GENOMIC DNA]</scope>
    <source>
        <strain>ATCC 8503 / DSM 20701 / CIP 104284 / JCM 5825 / NCTC 11152</strain>
    </source>
</reference>
<organism>
    <name type="scientific">Parabacteroides distasonis (strain ATCC 8503 / DSM 20701 / CIP 104284 / JCM 5825 / NCTC 11152)</name>
    <dbReference type="NCBI Taxonomy" id="435591"/>
    <lineage>
        <taxon>Bacteria</taxon>
        <taxon>Pseudomonadati</taxon>
        <taxon>Bacteroidota</taxon>
        <taxon>Bacteroidia</taxon>
        <taxon>Bacteroidales</taxon>
        <taxon>Tannerellaceae</taxon>
        <taxon>Parabacteroides</taxon>
    </lineage>
</organism>
<dbReference type="EC" id="3.6.4.-" evidence="1"/>
<dbReference type="EMBL" id="CP000140">
    <property type="protein sequence ID" value="ABR44625.1"/>
    <property type="molecule type" value="Genomic_DNA"/>
</dbReference>
<dbReference type="RefSeq" id="WP_011967062.1">
    <property type="nucleotide sequence ID" value="NC_009615.1"/>
</dbReference>
<dbReference type="SMR" id="A6LG11"/>
<dbReference type="STRING" id="435591.BDI_2917"/>
<dbReference type="PaxDb" id="435591-BDI_2917"/>
<dbReference type="KEGG" id="pdi:BDI_2917"/>
<dbReference type="PATRIC" id="fig|435591.13.peg.2879"/>
<dbReference type="eggNOG" id="COG2255">
    <property type="taxonomic scope" value="Bacteria"/>
</dbReference>
<dbReference type="HOGENOM" id="CLU_055599_1_0_10"/>
<dbReference type="BioCyc" id="PDIS435591:G1G5A-2993-MONOMER"/>
<dbReference type="Proteomes" id="UP000000566">
    <property type="component" value="Chromosome"/>
</dbReference>
<dbReference type="GO" id="GO:0005737">
    <property type="term" value="C:cytoplasm"/>
    <property type="evidence" value="ECO:0007669"/>
    <property type="project" value="UniProtKB-SubCell"/>
</dbReference>
<dbReference type="GO" id="GO:0048476">
    <property type="term" value="C:Holliday junction resolvase complex"/>
    <property type="evidence" value="ECO:0007669"/>
    <property type="project" value="UniProtKB-UniRule"/>
</dbReference>
<dbReference type="GO" id="GO:0005524">
    <property type="term" value="F:ATP binding"/>
    <property type="evidence" value="ECO:0007669"/>
    <property type="project" value="UniProtKB-UniRule"/>
</dbReference>
<dbReference type="GO" id="GO:0016887">
    <property type="term" value="F:ATP hydrolysis activity"/>
    <property type="evidence" value="ECO:0007669"/>
    <property type="project" value="InterPro"/>
</dbReference>
<dbReference type="GO" id="GO:0000400">
    <property type="term" value="F:four-way junction DNA binding"/>
    <property type="evidence" value="ECO:0007669"/>
    <property type="project" value="UniProtKB-UniRule"/>
</dbReference>
<dbReference type="GO" id="GO:0009378">
    <property type="term" value="F:four-way junction helicase activity"/>
    <property type="evidence" value="ECO:0007669"/>
    <property type="project" value="InterPro"/>
</dbReference>
<dbReference type="GO" id="GO:0006310">
    <property type="term" value="P:DNA recombination"/>
    <property type="evidence" value="ECO:0007669"/>
    <property type="project" value="UniProtKB-UniRule"/>
</dbReference>
<dbReference type="GO" id="GO:0006281">
    <property type="term" value="P:DNA repair"/>
    <property type="evidence" value="ECO:0007669"/>
    <property type="project" value="UniProtKB-UniRule"/>
</dbReference>
<dbReference type="CDD" id="cd00009">
    <property type="entry name" value="AAA"/>
    <property type="match status" value="1"/>
</dbReference>
<dbReference type="Gene3D" id="1.10.8.60">
    <property type="match status" value="1"/>
</dbReference>
<dbReference type="Gene3D" id="3.40.50.300">
    <property type="entry name" value="P-loop containing nucleotide triphosphate hydrolases"/>
    <property type="match status" value="1"/>
</dbReference>
<dbReference type="Gene3D" id="1.10.10.10">
    <property type="entry name" value="Winged helix-like DNA-binding domain superfamily/Winged helix DNA-binding domain"/>
    <property type="match status" value="1"/>
</dbReference>
<dbReference type="HAMAP" id="MF_00016">
    <property type="entry name" value="DNA_HJ_migration_RuvB"/>
    <property type="match status" value="1"/>
</dbReference>
<dbReference type="InterPro" id="IPR003593">
    <property type="entry name" value="AAA+_ATPase"/>
</dbReference>
<dbReference type="InterPro" id="IPR041445">
    <property type="entry name" value="AAA_lid_4"/>
</dbReference>
<dbReference type="InterPro" id="IPR004605">
    <property type="entry name" value="DNA_helicase_Holl-junc_RuvB"/>
</dbReference>
<dbReference type="InterPro" id="IPR027417">
    <property type="entry name" value="P-loop_NTPase"/>
</dbReference>
<dbReference type="InterPro" id="IPR008824">
    <property type="entry name" value="RuvB-like_N"/>
</dbReference>
<dbReference type="InterPro" id="IPR008823">
    <property type="entry name" value="RuvB_C"/>
</dbReference>
<dbReference type="InterPro" id="IPR036388">
    <property type="entry name" value="WH-like_DNA-bd_sf"/>
</dbReference>
<dbReference type="InterPro" id="IPR036390">
    <property type="entry name" value="WH_DNA-bd_sf"/>
</dbReference>
<dbReference type="NCBIfam" id="NF000868">
    <property type="entry name" value="PRK00080.1"/>
    <property type="match status" value="1"/>
</dbReference>
<dbReference type="NCBIfam" id="TIGR00635">
    <property type="entry name" value="ruvB"/>
    <property type="match status" value="1"/>
</dbReference>
<dbReference type="PANTHER" id="PTHR42848">
    <property type="match status" value="1"/>
</dbReference>
<dbReference type="PANTHER" id="PTHR42848:SF1">
    <property type="entry name" value="HOLLIDAY JUNCTION BRANCH MIGRATION COMPLEX SUBUNIT RUVB"/>
    <property type="match status" value="1"/>
</dbReference>
<dbReference type="Pfam" id="PF17864">
    <property type="entry name" value="AAA_lid_4"/>
    <property type="match status" value="1"/>
</dbReference>
<dbReference type="Pfam" id="PF05491">
    <property type="entry name" value="RuvB_C"/>
    <property type="match status" value="1"/>
</dbReference>
<dbReference type="Pfam" id="PF05496">
    <property type="entry name" value="RuvB_N"/>
    <property type="match status" value="1"/>
</dbReference>
<dbReference type="SMART" id="SM00382">
    <property type="entry name" value="AAA"/>
    <property type="match status" value="1"/>
</dbReference>
<dbReference type="SUPFAM" id="SSF52540">
    <property type="entry name" value="P-loop containing nucleoside triphosphate hydrolases"/>
    <property type="match status" value="1"/>
</dbReference>
<dbReference type="SUPFAM" id="SSF46785">
    <property type="entry name" value="Winged helix' DNA-binding domain"/>
    <property type="match status" value="1"/>
</dbReference>
<name>RUVB_PARD8</name>
<proteinExistence type="inferred from homology"/>
<evidence type="ECO:0000255" key="1">
    <source>
        <dbReference type="HAMAP-Rule" id="MF_00016"/>
    </source>
</evidence>
<accession>A6LG11</accession>
<keyword id="KW-0067">ATP-binding</keyword>
<keyword id="KW-0963">Cytoplasm</keyword>
<keyword id="KW-0227">DNA damage</keyword>
<keyword id="KW-0233">DNA recombination</keyword>
<keyword id="KW-0234">DNA repair</keyword>
<keyword id="KW-0238">DNA-binding</keyword>
<keyword id="KW-0378">Hydrolase</keyword>
<keyword id="KW-0547">Nucleotide-binding</keyword>
<keyword id="KW-1185">Reference proteome</keyword>
<protein>
    <recommendedName>
        <fullName evidence="1">Holliday junction branch migration complex subunit RuvB</fullName>
        <ecNumber evidence="1">3.6.4.-</ecNumber>
    </recommendedName>
</protein>
<gene>
    <name evidence="1" type="primary">ruvB</name>
    <name type="ordered locus">BDI_2917</name>
</gene>
<feature type="chain" id="PRO_1000001437" description="Holliday junction branch migration complex subunit RuvB">
    <location>
        <begin position="1"/>
        <end position="341"/>
    </location>
</feature>
<feature type="region of interest" description="Large ATPase domain (RuvB-L)" evidence="1">
    <location>
        <begin position="3"/>
        <end position="184"/>
    </location>
</feature>
<feature type="region of interest" description="Small ATPAse domain (RuvB-S)" evidence="1">
    <location>
        <begin position="185"/>
        <end position="255"/>
    </location>
</feature>
<feature type="region of interest" description="Head domain (RuvB-H)" evidence="1">
    <location>
        <begin position="258"/>
        <end position="341"/>
    </location>
</feature>
<feature type="binding site" evidence="1">
    <location>
        <position position="23"/>
    </location>
    <ligand>
        <name>ATP</name>
        <dbReference type="ChEBI" id="CHEBI:30616"/>
    </ligand>
</feature>
<feature type="binding site" evidence="1">
    <location>
        <position position="24"/>
    </location>
    <ligand>
        <name>ATP</name>
        <dbReference type="ChEBI" id="CHEBI:30616"/>
    </ligand>
</feature>
<feature type="binding site" evidence="1">
    <location>
        <position position="65"/>
    </location>
    <ligand>
        <name>ATP</name>
        <dbReference type="ChEBI" id="CHEBI:30616"/>
    </ligand>
</feature>
<feature type="binding site" evidence="1">
    <location>
        <position position="68"/>
    </location>
    <ligand>
        <name>ATP</name>
        <dbReference type="ChEBI" id="CHEBI:30616"/>
    </ligand>
</feature>
<feature type="binding site" evidence="1">
    <location>
        <position position="69"/>
    </location>
    <ligand>
        <name>ATP</name>
        <dbReference type="ChEBI" id="CHEBI:30616"/>
    </ligand>
</feature>
<feature type="binding site" evidence="1">
    <location>
        <position position="69"/>
    </location>
    <ligand>
        <name>Mg(2+)</name>
        <dbReference type="ChEBI" id="CHEBI:18420"/>
    </ligand>
</feature>
<feature type="binding site" evidence="1">
    <location>
        <position position="70"/>
    </location>
    <ligand>
        <name>ATP</name>
        <dbReference type="ChEBI" id="CHEBI:30616"/>
    </ligand>
</feature>
<feature type="binding site" evidence="1">
    <location>
        <begin position="131"/>
        <end position="133"/>
    </location>
    <ligand>
        <name>ATP</name>
        <dbReference type="ChEBI" id="CHEBI:30616"/>
    </ligand>
</feature>
<feature type="binding site" evidence="1">
    <location>
        <position position="174"/>
    </location>
    <ligand>
        <name>ATP</name>
        <dbReference type="ChEBI" id="CHEBI:30616"/>
    </ligand>
</feature>
<feature type="binding site" evidence="1">
    <location>
        <position position="184"/>
    </location>
    <ligand>
        <name>ATP</name>
        <dbReference type="ChEBI" id="CHEBI:30616"/>
    </ligand>
</feature>
<feature type="binding site" evidence="1">
    <location>
        <position position="221"/>
    </location>
    <ligand>
        <name>ATP</name>
        <dbReference type="ChEBI" id="CHEBI:30616"/>
    </ligand>
</feature>
<feature type="binding site" evidence="1">
    <location>
        <position position="313"/>
    </location>
    <ligand>
        <name>DNA</name>
        <dbReference type="ChEBI" id="CHEBI:16991"/>
    </ligand>
</feature>
<feature type="binding site" evidence="1">
    <location>
        <position position="318"/>
    </location>
    <ligand>
        <name>DNA</name>
        <dbReference type="ChEBI" id="CHEBI:16991"/>
    </ligand>
</feature>
<comment type="function">
    <text evidence="1">The RuvA-RuvB-RuvC complex processes Holliday junction (HJ) DNA during genetic recombination and DNA repair, while the RuvA-RuvB complex plays an important role in the rescue of blocked DNA replication forks via replication fork reversal (RFR). RuvA specifically binds to HJ cruciform DNA, conferring on it an open structure. The RuvB hexamer acts as an ATP-dependent pump, pulling dsDNA into and through the RuvAB complex. RuvB forms 2 homohexamers on either side of HJ DNA bound by 1 or 2 RuvA tetramers; 4 subunits per hexamer contact DNA at a time. Coordinated motions by a converter formed by DNA-disengaged RuvB subunits stimulates ATP hydrolysis and nucleotide exchange. Immobilization of the converter enables RuvB to convert the ATP-contained energy into a lever motion, pulling 2 nucleotides of DNA out of the RuvA tetramer per ATP hydrolyzed, thus driving DNA branch migration. The RuvB motors rotate together with the DNA substrate, which together with the progressing nucleotide cycle form the mechanistic basis for DNA recombination by continuous HJ branch migration. Branch migration allows RuvC to scan DNA until it finds its consensus sequence, where it cleaves and resolves cruciform DNA.</text>
</comment>
<comment type="catalytic activity">
    <reaction evidence="1">
        <text>ATP + H2O = ADP + phosphate + H(+)</text>
        <dbReference type="Rhea" id="RHEA:13065"/>
        <dbReference type="ChEBI" id="CHEBI:15377"/>
        <dbReference type="ChEBI" id="CHEBI:15378"/>
        <dbReference type="ChEBI" id="CHEBI:30616"/>
        <dbReference type="ChEBI" id="CHEBI:43474"/>
        <dbReference type="ChEBI" id="CHEBI:456216"/>
    </reaction>
</comment>
<comment type="subunit">
    <text evidence="1">Homohexamer. Forms an RuvA(8)-RuvB(12)-Holliday junction (HJ) complex. HJ DNA is sandwiched between 2 RuvA tetramers; dsDNA enters through RuvA and exits via RuvB. An RuvB hexamer assembles on each DNA strand where it exits the tetramer. Each RuvB hexamer is contacted by two RuvA subunits (via domain III) on 2 adjacent RuvB subunits; this complex drives branch migration. In the full resolvosome a probable DNA-RuvA(4)-RuvB(12)-RuvC(2) complex forms which resolves the HJ.</text>
</comment>
<comment type="subcellular location">
    <subcellularLocation>
        <location evidence="1">Cytoplasm</location>
    </subcellularLocation>
</comment>
<comment type="domain">
    <text evidence="1">Has 3 domains, the large (RuvB-L) and small ATPase (RuvB-S) domains and the C-terminal head (RuvB-H) domain. The head domain binds DNA, while the ATPase domains jointly bind ATP, ADP or are empty depending on the state of the subunit in the translocation cycle. During a single DNA translocation step the structure of each domain remains the same, but their relative positions change.</text>
</comment>
<comment type="similarity">
    <text evidence="1">Belongs to the RuvB family.</text>
</comment>